<sequence length="156" mass="17591">MSRRKSAVKRTILPDARYDSQTVSKFINSLMIQGKKSTAEGIFYGAMDIVEAKTSQPGVGVFKQALNNLKPVVEVKSRRVGGATYQVPVEVRQDRRTALAMRWLISYSRDRNEKSMKEKLAAEVLAASRGEGNAVKKKEDTHRMAEANKAFAHYRW</sequence>
<proteinExistence type="inferred from homology"/>
<name>RS7_GEMAT</name>
<gene>
    <name evidence="1" type="primary">rpsG</name>
    <name type="ordered locus">GAU_0860</name>
</gene>
<accession>C1A6P2</accession>
<feature type="chain" id="PRO_1000206404" description="Small ribosomal subunit protein uS7">
    <location>
        <begin position="1"/>
        <end position="156"/>
    </location>
</feature>
<evidence type="ECO:0000255" key="1">
    <source>
        <dbReference type="HAMAP-Rule" id="MF_00480"/>
    </source>
</evidence>
<evidence type="ECO:0000305" key="2"/>
<keyword id="KW-1185">Reference proteome</keyword>
<keyword id="KW-0687">Ribonucleoprotein</keyword>
<keyword id="KW-0689">Ribosomal protein</keyword>
<keyword id="KW-0694">RNA-binding</keyword>
<keyword id="KW-0699">rRNA-binding</keyword>
<keyword id="KW-0820">tRNA-binding</keyword>
<organism>
    <name type="scientific">Gemmatimonas aurantiaca (strain DSM 14586 / JCM 11422 / NBRC 100505 / T-27)</name>
    <dbReference type="NCBI Taxonomy" id="379066"/>
    <lineage>
        <taxon>Bacteria</taxon>
        <taxon>Pseudomonadati</taxon>
        <taxon>Gemmatimonadota</taxon>
        <taxon>Gemmatimonadia</taxon>
        <taxon>Gemmatimonadales</taxon>
        <taxon>Gemmatimonadaceae</taxon>
        <taxon>Gemmatimonas</taxon>
    </lineage>
</organism>
<reference key="1">
    <citation type="submission" date="2006-03" db="EMBL/GenBank/DDBJ databases">
        <title>Complete genome sequence of Gemmatimonas aurantiaca T-27 that represents a novel phylum Gemmatimonadetes.</title>
        <authorList>
            <person name="Takasaki K."/>
            <person name="Ichikawa N."/>
            <person name="Miura H."/>
            <person name="Matsushita S."/>
            <person name="Watanabe Y."/>
            <person name="Oguchi A."/>
            <person name="Ankai A."/>
            <person name="Yashiro I."/>
            <person name="Takahashi M."/>
            <person name="Terui Y."/>
            <person name="Fukui S."/>
            <person name="Yokoyama H."/>
            <person name="Tanikawa S."/>
            <person name="Hanada S."/>
            <person name="Kamagata Y."/>
            <person name="Fujita N."/>
        </authorList>
    </citation>
    <scope>NUCLEOTIDE SEQUENCE [LARGE SCALE GENOMIC DNA]</scope>
    <source>
        <strain>DSM 14586 / JCM 11422 / NBRC 100505 / T-27</strain>
    </source>
</reference>
<dbReference type="EMBL" id="AP009153">
    <property type="protein sequence ID" value="BAH37902.1"/>
    <property type="molecule type" value="Genomic_DNA"/>
</dbReference>
<dbReference type="RefSeq" id="WP_012682349.1">
    <property type="nucleotide sequence ID" value="NC_012489.1"/>
</dbReference>
<dbReference type="SMR" id="C1A6P2"/>
<dbReference type="STRING" id="379066.GAU_0860"/>
<dbReference type="KEGG" id="gau:GAU_0860"/>
<dbReference type="eggNOG" id="COG0049">
    <property type="taxonomic scope" value="Bacteria"/>
</dbReference>
<dbReference type="HOGENOM" id="CLU_072226_1_1_0"/>
<dbReference type="OrthoDB" id="9807653at2"/>
<dbReference type="Proteomes" id="UP000002209">
    <property type="component" value="Chromosome"/>
</dbReference>
<dbReference type="GO" id="GO:0015935">
    <property type="term" value="C:small ribosomal subunit"/>
    <property type="evidence" value="ECO:0007669"/>
    <property type="project" value="InterPro"/>
</dbReference>
<dbReference type="GO" id="GO:0019843">
    <property type="term" value="F:rRNA binding"/>
    <property type="evidence" value="ECO:0007669"/>
    <property type="project" value="UniProtKB-UniRule"/>
</dbReference>
<dbReference type="GO" id="GO:0003735">
    <property type="term" value="F:structural constituent of ribosome"/>
    <property type="evidence" value="ECO:0007669"/>
    <property type="project" value="InterPro"/>
</dbReference>
<dbReference type="GO" id="GO:0000049">
    <property type="term" value="F:tRNA binding"/>
    <property type="evidence" value="ECO:0007669"/>
    <property type="project" value="UniProtKB-UniRule"/>
</dbReference>
<dbReference type="GO" id="GO:0006412">
    <property type="term" value="P:translation"/>
    <property type="evidence" value="ECO:0007669"/>
    <property type="project" value="UniProtKB-UniRule"/>
</dbReference>
<dbReference type="CDD" id="cd14869">
    <property type="entry name" value="uS7_Bacteria"/>
    <property type="match status" value="1"/>
</dbReference>
<dbReference type="FunFam" id="1.10.455.10:FF:000001">
    <property type="entry name" value="30S ribosomal protein S7"/>
    <property type="match status" value="1"/>
</dbReference>
<dbReference type="Gene3D" id="1.10.455.10">
    <property type="entry name" value="Ribosomal protein S7 domain"/>
    <property type="match status" value="1"/>
</dbReference>
<dbReference type="HAMAP" id="MF_00480_B">
    <property type="entry name" value="Ribosomal_uS7_B"/>
    <property type="match status" value="1"/>
</dbReference>
<dbReference type="InterPro" id="IPR000235">
    <property type="entry name" value="Ribosomal_uS7"/>
</dbReference>
<dbReference type="InterPro" id="IPR005717">
    <property type="entry name" value="Ribosomal_uS7_bac/org-type"/>
</dbReference>
<dbReference type="InterPro" id="IPR020606">
    <property type="entry name" value="Ribosomal_uS7_CS"/>
</dbReference>
<dbReference type="InterPro" id="IPR023798">
    <property type="entry name" value="Ribosomal_uS7_dom"/>
</dbReference>
<dbReference type="InterPro" id="IPR036823">
    <property type="entry name" value="Ribosomal_uS7_dom_sf"/>
</dbReference>
<dbReference type="NCBIfam" id="TIGR01029">
    <property type="entry name" value="rpsG_bact"/>
    <property type="match status" value="1"/>
</dbReference>
<dbReference type="PANTHER" id="PTHR11205">
    <property type="entry name" value="RIBOSOMAL PROTEIN S7"/>
    <property type="match status" value="1"/>
</dbReference>
<dbReference type="Pfam" id="PF00177">
    <property type="entry name" value="Ribosomal_S7"/>
    <property type="match status" value="1"/>
</dbReference>
<dbReference type="PIRSF" id="PIRSF002122">
    <property type="entry name" value="RPS7p_RPS7a_RPS5e_RPS7o"/>
    <property type="match status" value="1"/>
</dbReference>
<dbReference type="SUPFAM" id="SSF47973">
    <property type="entry name" value="Ribosomal protein S7"/>
    <property type="match status" value="1"/>
</dbReference>
<dbReference type="PROSITE" id="PS00052">
    <property type="entry name" value="RIBOSOMAL_S7"/>
    <property type="match status" value="1"/>
</dbReference>
<comment type="function">
    <text evidence="1">One of the primary rRNA binding proteins, it binds directly to 16S rRNA where it nucleates assembly of the head domain of the 30S subunit. Is located at the subunit interface close to the decoding center, probably blocks exit of the E-site tRNA.</text>
</comment>
<comment type="subunit">
    <text evidence="1">Part of the 30S ribosomal subunit. Contacts proteins S9 and S11.</text>
</comment>
<comment type="similarity">
    <text evidence="1">Belongs to the universal ribosomal protein uS7 family.</text>
</comment>
<protein>
    <recommendedName>
        <fullName evidence="1">Small ribosomal subunit protein uS7</fullName>
    </recommendedName>
    <alternativeName>
        <fullName evidence="2">30S ribosomal protein S7</fullName>
    </alternativeName>
</protein>